<reference key="1">
    <citation type="journal article" date="2002" name="J. Bacteriol.">
        <title>Genome sequence and analysis of the oral bacterium Fusobacterium nucleatum strain ATCC 25586.</title>
        <authorList>
            <person name="Kapatral V."/>
            <person name="Anderson I."/>
            <person name="Ivanova N."/>
            <person name="Reznik G."/>
            <person name="Los T."/>
            <person name="Lykidis A."/>
            <person name="Bhattacharyya A."/>
            <person name="Bartman A."/>
            <person name="Gardner W."/>
            <person name="Grechkin G."/>
            <person name="Zhu L."/>
            <person name="Vasieva O."/>
            <person name="Chu L."/>
            <person name="Kogan Y."/>
            <person name="Chaga O."/>
            <person name="Goltsman E."/>
            <person name="Bernal A."/>
            <person name="Larsen N."/>
            <person name="D'Souza M."/>
            <person name="Walunas T."/>
            <person name="Pusch G."/>
            <person name="Haselkorn R."/>
            <person name="Fonstein M."/>
            <person name="Kyrpides N.C."/>
            <person name="Overbeek R."/>
        </authorList>
    </citation>
    <scope>NUCLEOTIDE SEQUENCE [LARGE SCALE GENOMIC DNA]</scope>
    <source>
        <strain>ATCC 25586 / DSM 15643 / BCRC 10681 / CIP 101130 / JCM 8532 / KCTC 2640 / LMG 13131 / VPI 4355</strain>
    </source>
</reference>
<sequence length="316" mass="35110">MINFNNVKIFSGNSNLELAKKIAEKAGLQLGKAEIQRFKDGEVYIEIEETVRGRDVFVVQSTSEPVNENLMELLIFVDALKRASAKTINVIIPYYGYARQDRKSKPREPITSKLVANLLTTAGVNRVVAMDLHADQIQGFFDIPLDHMQALPLMARYFKEKGFKGDEVVVVSPDVGGVKRARKLAEKLDCKIAIIDKRRPKPNMSEVMNLIGEVEGKIAIFIDDMIDTAGTITNGADAIAQRGAKEVYACCTHAVFSDPAIERLEKSVLKEIVITDSIALPERKKIDKIKILSVDSVFANAIDRITNNQSVSELFN</sequence>
<keyword id="KW-0067">ATP-binding</keyword>
<keyword id="KW-0963">Cytoplasm</keyword>
<keyword id="KW-0418">Kinase</keyword>
<keyword id="KW-0460">Magnesium</keyword>
<keyword id="KW-0479">Metal-binding</keyword>
<keyword id="KW-0545">Nucleotide biosynthesis</keyword>
<keyword id="KW-0547">Nucleotide-binding</keyword>
<keyword id="KW-1185">Reference proteome</keyword>
<keyword id="KW-0808">Transferase</keyword>
<proteinExistence type="inferred from homology"/>
<feature type="chain" id="PRO_0000141139" description="Ribose-phosphate pyrophosphokinase">
    <location>
        <begin position="1"/>
        <end position="316"/>
    </location>
</feature>
<feature type="active site" evidence="1">
    <location>
        <position position="197"/>
    </location>
</feature>
<feature type="binding site" evidence="1">
    <location>
        <begin position="40"/>
        <end position="42"/>
    </location>
    <ligand>
        <name>ATP</name>
        <dbReference type="ChEBI" id="CHEBI:30616"/>
    </ligand>
</feature>
<feature type="binding site" evidence="1">
    <location>
        <begin position="99"/>
        <end position="100"/>
    </location>
    <ligand>
        <name>ATP</name>
        <dbReference type="ChEBI" id="CHEBI:30616"/>
    </ligand>
</feature>
<feature type="binding site" evidence="1">
    <location>
        <position position="133"/>
    </location>
    <ligand>
        <name>Mg(2+)</name>
        <dbReference type="ChEBI" id="CHEBI:18420"/>
        <label>1</label>
    </ligand>
</feature>
<feature type="binding site" evidence="1">
    <location>
        <position position="174"/>
    </location>
    <ligand>
        <name>Mg(2+)</name>
        <dbReference type="ChEBI" id="CHEBI:18420"/>
        <label>2</label>
    </ligand>
</feature>
<feature type="binding site" evidence="1">
    <location>
        <position position="199"/>
    </location>
    <ligand>
        <name>D-ribose 5-phosphate</name>
        <dbReference type="ChEBI" id="CHEBI:78346"/>
    </ligand>
</feature>
<feature type="binding site" evidence="1">
    <location>
        <position position="223"/>
    </location>
    <ligand>
        <name>D-ribose 5-phosphate</name>
        <dbReference type="ChEBI" id="CHEBI:78346"/>
    </ligand>
</feature>
<feature type="binding site" evidence="1">
    <location>
        <begin position="227"/>
        <end position="231"/>
    </location>
    <ligand>
        <name>D-ribose 5-phosphate</name>
        <dbReference type="ChEBI" id="CHEBI:78346"/>
    </ligand>
</feature>
<protein>
    <recommendedName>
        <fullName evidence="1">Ribose-phosphate pyrophosphokinase</fullName>
        <shortName evidence="1">RPPK</shortName>
        <ecNumber evidence="1">2.7.6.1</ecNumber>
    </recommendedName>
    <alternativeName>
        <fullName evidence="1">5-phospho-D-ribosyl alpha-1-diphosphate synthase</fullName>
    </alternativeName>
    <alternativeName>
        <fullName evidence="1">Phosphoribosyl diphosphate synthase</fullName>
    </alternativeName>
    <alternativeName>
        <fullName evidence="1">Phosphoribosyl pyrophosphate synthase</fullName>
        <shortName evidence="1">P-Rib-PP synthase</shortName>
        <shortName evidence="1">PRPP synthase</shortName>
        <shortName evidence="1">PRPPase</shortName>
    </alternativeName>
</protein>
<name>KPRS_FUSNN</name>
<organism>
    <name type="scientific">Fusobacterium nucleatum subsp. nucleatum (strain ATCC 25586 / DSM 15643 / BCRC 10681 / CIP 101130 / JCM 8532 / KCTC 2640 / LMG 13131 / VPI 4355)</name>
    <dbReference type="NCBI Taxonomy" id="190304"/>
    <lineage>
        <taxon>Bacteria</taxon>
        <taxon>Fusobacteriati</taxon>
        <taxon>Fusobacteriota</taxon>
        <taxon>Fusobacteriia</taxon>
        <taxon>Fusobacteriales</taxon>
        <taxon>Fusobacteriaceae</taxon>
        <taxon>Fusobacterium</taxon>
    </lineage>
</organism>
<comment type="function">
    <text evidence="1">Involved in the biosynthesis of the central metabolite phospho-alpha-D-ribosyl-1-pyrophosphate (PRPP) via the transfer of pyrophosphoryl group from ATP to 1-hydroxyl of ribose-5-phosphate (Rib-5-P).</text>
</comment>
<comment type="catalytic activity">
    <reaction evidence="1">
        <text>D-ribose 5-phosphate + ATP = 5-phospho-alpha-D-ribose 1-diphosphate + AMP + H(+)</text>
        <dbReference type="Rhea" id="RHEA:15609"/>
        <dbReference type="ChEBI" id="CHEBI:15378"/>
        <dbReference type="ChEBI" id="CHEBI:30616"/>
        <dbReference type="ChEBI" id="CHEBI:58017"/>
        <dbReference type="ChEBI" id="CHEBI:78346"/>
        <dbReference type="ChEBI" id="CHEBI:456215"/>
        <dbReference type="EC" id="2.7.6.1"/>
    </reaction>
</comment>
<comment type="cofactor">
    <cofactor evidence="1">
        <name>Mg(2+)</name>
        <dbReference type="ChEBI" id="CHEBI:18420"/>
    </cofactor>
    <text evidence="1">Binds 2 Mg(2+) ions per subunit.</text>
</comment>
<comment type="pathway">
    <text evidence="1">Metabolic intermediate biosynthesis; 5-phospho-alpha-D-ribose 1-diphosphate biosynthesis; 5-phospho-alpha-D-ribose 1-diphosphate from D-ribose 5-phosphate (route I): step 1/1.</text>
</comment>
<comment type="subunit">
    <text evidence="1">Homohexamer.</text>
</comment>
<comment type="subcellular location">
    <subcellularLocation>
        <location evidence="1">Cytoplasm</location>
    </subcellularLocation>
</comment>
<comment type="similarity">
    <text evidence="1">Belongs to the ribose-phosphate pyrophosphokinase family. Class I subfamily.</text>
</comment>
<dbReference type="EC" id="2.7.6.1" evidence="1"/>
<dbReference type="EMBL" id="AE009951">
    <property type="protein sequence ID" value="AAL94082.1"/>
    <property type="molecule type" value="Genomic_DNA"/>
</dbReference>
<dbReference type="RefSeq" id="NP_602783.1">
    <property type="nucleotide sequence ID" value="NC_003454.1"/>
</dbReference>
<dbReference type="RefSeq" id="WP_005903312.1">
    <property type="nucleotide sequence ID" value="NZ_OZ209243.1"/>
</dbReference>
<dbReference type="SMR" id="Q8RHM2"/>
<dbReference type="FunCoup" id="Q8RHM2">
    <property type="interactions" value="402"/>
</dbReference>
<dbReference type="STRING" id="190304.FN1992"/>
<dbReference type="PaxDb" id="190304-FN1992"/>
<dbReference type="EnsemblBacteria" id="AAL94082">
    <property type="protein sequence ID" value="AAL94082"/>
    <property type="gene ID" value="FN1992"/>
</dbReference>
<dbReference type="KEGG" id="fnu:FN1992"/>
<dbReference type="PATRIC" id="fig|190304.8.peg.460"/>
<dbReference type="eggNOG" id="COG0462">
    <property type="taxonomic scope" value="Bacteria"/>
</dbReference>
<dbReference type="HOGENOM" id="CLU_033546_1_0_0"/>
<dbReference type="InParanoid" id="Q8RHM2"/>
<dbReference type="BioCyc" id="FNUC190304:G1FZS-481-MONOMER"/>
<dbReference type="UniPathway" id="UPA00087">
    <property type="reaction ID" value="UER00172"/>
</dbReference>
<dbReference type="Proteomes" id="UP000002521">
    <property type="component" value="Chromosome"/>
</dbReference>
<dbReference type="GO" id="GO:0005737">
    <property type="term" value="C:cytoplasm"/>
    <property type="evidence" value="ECO:0000318"/>
    <property type="project" value="GO_Central"/>
</dbReference>
<dbReference type="GO" id="GO:0002189">
    <property type="term" value="C:ribose phosphate diphosphokinase complex"/>
    <property type="evidence" value="ECO:0000318"/>
    <property type="project" value="GO_Central"/>
</dbReference>
<dbReference type="GO" id="GO:0005524">
    <property type="term" value="F:ATP binding"/>
    <property type="evidence" value="ECO:0007669"/>
    <property type="project" value="UniProtKB-KW"/>
</dbReference>
<dbReference type="GO" id="GO:0016301">
    <property type="term" value="F:kinase activity"/>
    <property type="evidence" value="ECO:0007669"/>
    <property type="project" value="UniProtKB-KW"/>
</dbReference>
<dbReference type="GO" id="GO:0000287">
    <property type="term" value="F:magnesium ion binding"/>
    <property type="evidence" value="ECO:0007669"/>
    <property type="project" value="UniProtKB-UniRule"/>
</dbReference>
<dbReference type="GO" id="GO:0004749">
    <property type="term" value="F:ribose phosphate diphosphokinase activity"/>
    <property type="evidence" value="ECO:0000318"/>
    <property type="project" value="GO_Central"/>
</dbReference>
<dbReference type="GO" id="GO:0006015">
    <property type="term" value="P:5-phosphoribose 1-diphosphate biosynthetic process"/>
    <property type="evidence" value="ECO:0000318"/>
    <property type="project" value="GO_Central"/>
</dbReference>
<dbReference type="GO" id="GO:0006164">
    <property type="term" value="P:purine nucleotide biosynthetic process"/>
    <property type="evidence" value="ECO:0000318"/>
    <property type="project" value="GO_Central"/>
</dbReference>
<dbReference type="GO" id="GO:0009156">
    <property type="term" value="P:ribonucleoside monophosphate biosynthetic process"/>
    <property type="evidence" value="ECO:0007669"/>
    <property type="project" value="InterPro"/>
</dbReference>
<dbReference type="CDD" id="cd06223">
    <property type="entry name" value="PRTases_typeI"/>
    <property type="match status" value="1"/>
</dbReference>
<dbReference type="FunFam" id="3.40.50.2020:FF:000002">
    <property type="entry name" value="Ribose-phosphate pyrophosphokinase"/>
    <property type="match status" value="1"/>
</dbReference>
<dbReference type="FunFam" id="3.40.50.2020:FF:000014">
    <property type="entry name" value="Ribose-phosphate pyrophosphokinase 1"/>
    <property type="match status" value="1"/>
</dbReference>
<dbReference type="Gene3D" id="3.40.50.2020">
    <property type="match status" value="2"/>
</dbReference>
<dbReference type="HAMAP" id="MF_00583_B">
    <property type="entry name" value="RibP_PPkinase_B"/>
    <property type="match status" value="1"/>
</dbReference>
<dbReference type="InterPro" id="IPR000842">
    <property type="entry name" value="PRib_PP_synth_CS"/>
</dbReference>
<dbReference type="InterPro" id="IPR029099">
    <property type="entry name" value="Pribosyltran_N"/>
</dbReference>
<dbReference type="InterPro" id="IPR000836">
    <property type="entry name" value="PRibTrfase_dom"/>
</dbReference>
<dbReference type="InterPro" id="IPR029057">
    <property type="entry name" value="PRTase-like"/>
</dbReference>
<dbReference type="InterPro" id="IPR005946">
    <property type="entry name" value="Rib-P_diPkinase"/>
</dbReference>
<dbReference type="InterPro" id="IPR037515">
    <property type="entry name" value="Rib-P_diPkinase_bac"/>
</dbReference>
<dbReference type="NCBIfam" id="NF002320">
    <property type="entry name" value="PRK01259.1"/>
    <property type="match status" value="1"/>
</dbReference>
<dbReference type="NCBIfam" id="NF002618">
    <property type="entry name" value="PRK02269.1"/>
    <property type="match status" value="1"/>
</dbReference>
<dbReference type="NCBIfam" id="TIGR01251">
    <property type="entry name" value="ribP_PPkin"/>
    <property type="match status" value="1"/>
</dbReference>
<dbReference type="PANTHER" id="PTHR10210">
    <property type="entry name" value="RIBOSE-PHOSPHATE DIPHOSPHOKINASE FAMILY MEMBER"/>
    <property type="match status" value="1"/>
</dbReference>
<dbReference type="PANTHER" id="PTHR10210:SF41">
    <property type="entry name" value="RIBOSE-PHOSPHATE PYROPHOSPHOKINASE 1, CHLOROPLASTIC"/>
    <property type="match status" value="1"/>
</dbReference>
<dbReference type="Pfam" id="PF14572">
    <property type="entry name" value="Pribosyl_synth"/>
    <property type="match status" value="1"/>
</dbReference>
<dbReference type="Pfam" id="PF13793">
    <property type="entry name" value="Pribosyltran_N"/>
    <property type="match status" value="1"/>
</dbReference>
<dbReference type="SMART" id="SM01400">
    <property type="entry name" value="Pribosyltran_N"/>
    <property type="match status" value="1"/>
</dbReference>
<dbReference type="SUPFAM" id="SSF53271">
    <property type="entry name" value="PRTase-like"/>
    <property type="match status" value="1"/>
</dbReference>
<dbReference type="PROSITE" id="PS00114">
    <property type="entry name" value="PRPP_SYNTHASE"/>
    <property type="match status" value="1"/>
</dbReference>
<gene>
    <name evidence="1" type="primary">prs</name>
    <name type="ordered locus">FN1992</name>
</gene>
<accession>Q8RHM2</accession>
<evidence type="ECO:0000255" key="1">
    <source>
        <dbReference type="HAMAP-Rule" id="MF_00583"/>
    </source>
</evidence>